<proteinExistence type="inferred from homology"/>
<dbReference type="EC" id="7.2.2.20" evidence="1"/>
<dbReference type="EMBL" id="BA000021">
    <property type="protein sequence ID" value="BAC24262.1"/>
    <property type="molecule type" value="Genomic_DNA"/>
</dbReference>
<dbReference type="SMR" id="Q8D385"/>
<dbReference type="STRING" id="36870.gene:10368594"/>
<dbReference type="KEGG" id="wbr:yebM"/>
<dbReference type="eggNOG" id="COG1121">
    <property type="taxonomic scope" value="Bacteria"/>
</dbReference>
<dbReference type="HOGENOM" id="CLU_000604_1_11_6"/>
<dbReference type="OrthoDB" id="9780942at2"/>
<dbReference type="Proteomes" id="UP000000562">
    <property type="component" value="Chromosome"/>
</dbReference>
<dbReference type="GO" id="GO:0005886">
    <property type="term" value="C:plasma membrane"/>
    <property type="evidence" value="ECO:0007669"/>
    <property type="project" value="UniProtKB-SubCell"/>
</dbReference>
<dbReference type="GO" id="GO:0015633">
    <property type="term" value="F:ABC-type zinc transporter activity"/>
    <property type="evidence" value="ECO:0007669"/>
    <property type="project" value="UniProtKB-EC"/>
</dbReference>
<dbReference type="GO" id="GO:0005524">
    <property type="term" value="F:ATP binding"/>
    <property type="evidence" value="ECO:0007669"/>
    <property type="project" value="UniProtKB-KW"/>
</dbReference>
<dbReference type="GO" id="GO:0016887">
    <property type="term" value="F:ATP hydrolysis activity"/>
    <property type="evidence" value="ECO:0007669"/>
    <property type="project" value="InterPro"/>
</dbReference>
<dbReference type="GO" id="GO:0010043">
    <property type="term" value="P:response to zinc ion"/>
    <property type="evidence" value="ECO:0007669"/>
    <property type="project" value="TreeGrafter"/>
</dbReference>
<dbReference type="FunFam" id="3.40.50.300:FF:000392">
    <property type="entry name" value="Zinc import ATP-binding protein ZnuC"/>
    <property type="match status" value="1"/>
</dbReference>
<dbReference type="Gene3D" id="3.40.50.300">
    <property type="entry name" value="P-loop containing nucleotide triphosphate hydrolases"/>
    <property type="match status" value="1"/>
</dbReference>
<dbReference type="InterPro" id="IPR003593">
    <property type="entry name" value="AAA+_ATPase"/>
</dbReference>
<dbReference type="InterPro" id="IPR003439">
    <property type="entry name" value="ABC_transporter-like_ATP-bd"/>
</dbReference>
<dbReference type="InterPro" id="IPR017871">
    <property type="entry name" value="ABC_transporter-like_CS"/>
</dbReference>
<dbReference type="InterPro" id="IPR050153">
    <property type="entry name" value="Metal_Ion_Import_ABC"/>
</dbReference>
<dbReference type="InterPro" id="IPR027417">
    <property type="entry name" value="P-loop_NTPase"/>
</dbReference>
<dbReference type="NCBIfam" id="NF007090">
    <property type="entry name" value="PRK09544.1"/>
    <property type="match status" value="1"/>
</dbReference>
<dbReference type="PANTHER" id="PTHR42734">
    <property type="entry name" value="METAL TRANSPORT SYSTEM ATP-BINDING PROTEIN TM_0124-RELATED"/>
    <property type="match status" value="1"/>
</dbReference>
<dbReference type="PANTHER" id="PTHR42734:SF9">
    <property type="entry name" value="ZINC IMPORT ATP-BINDING PROTEIN ZNUC"/>
    <property type="match status" value="1"/>
</dbReference>
<dbReference type="Pfam" id="PF00005">
    <property type="entry name" value="ABC_tran"/>
    <property type="match status" value="1"/>
</dbReference>
<dbReference type="SMART" id="SM00382">
    <property type="entry name" value="AAA"/>
    <property type="match status" value="1"/>
</dbReference>
<dbReference type="SUPFAM" id="SSF52540">
    <property type="entry name" value="P-loop containing nucleoside triphosphate hydrolases"/>
    <property type="match status" value="1"/>
</dbReference>
<dbReference type="PROSITE" id="PS00211">
    <property type="entry name" value="ABC_TRANSPORTER_1"/>
    <property type="match status" value="1"/>
</dbReference>
<dbReference type="PROSITE" id="PS50893">
    <property type="entry name" value="ABC_TRANSPORTER_2"/>
    <property type="match status" value="1"/>
</dbReference>
<dbReference type="PROSITE" id="PS51298">
    <property type="entry name" value="ZNUC"/>
    <property type="match status" value="1"/>
</dbReference>
<keyword id="KW-0067">ATP-binding</keyword>
<keyword id="KW-1003">Cell membrane</keyword>
<keyword id="KW-0406">Ion transport</keyword>
<keyword id="KW-0472">Membrane</keyword>
<keyword id="KW-0547">Nucleotide-binding</keyword>
<keyword id="KW-1185">Reference proteome</keyword>
<keyword id="KW-1278">Translocase</keyword>
<keyword id="KW-0813">Transport</keyword>
<keyword id="KW-0862">Zinc</keyword>
<keyword id="KW-0864">Zinc transport</keyword>
<comment type="function">
    <text evidence="1">Part of the ABC transporter complex ZnuABC involved in zinc import. Responsible for energy coupling to the transport system.</text>
</comment>
<comment type="catalytic activity">
    <reaction evidence="1">
        <text>Zn(2+)(out) + ATP(in) + H2O(in) = Zn(2+)(in) + ADP(in) + phosphate(in) + H(+)(in)</text>
        <dbReference type="Rhea" id="RHEA:29795"/>
        <dbReference type="ChEBI" id="CHEBI:15377"/>
        <dbReference type="ChEBI" id="CHEBI:15378"/>
        <dbReference type="ChEBI" id="CHEBI:29105"/>
        <dbReference type="ChEBI" id="CHEBI:30616"/>
        <dbReference type="ChEBI" id="CHEBI:43474"/>
        <dbReference type="ChEBI" id="CHEBI:456216"/>
        <dbReference type="EC" id="7.2.2.20"/>
    </reaction>
</comment>
<comment type="subunit">
    <text evidence="1">The complex is composed of two ATP-binding proteins (ZnuC), two transmembrane proteins (ZnuB) and a solute-binding protein (ZnuA).</text>
</comment>
<comment type="subcellular location">
    <subcellularLocation>
        <location evidence="1">Cell membrane</location>
        <topology evidence="1">Peripheral membrane protein</topology>
    </subcellularLocation>
</comment>
<comment type="similarity">
    <text evidence="1">Belongs to the ABC transporter superfamily. Zinc importer (TC 3.A.1.15.5) family.</text>
</comment>
<sequence length="232" mass="26396">MENIVNLKNIFVFYGKKKILNNISFKISHGKIITILGPNGSGKSTLARVILGLILPSHGKLIKHKKLRMSYVPQKIFFDINIPITVEKFMNLNSFFKKNNVHKFLQKVNAEHLLKKSIHNLSGGEIQKVLLARSLLNKPHLIVLDEPTQGLDINGQNILYDLITKIHGILSCSIIIISHDLHIVMAKTDEVICLNRSILCYGTPKKISDHPSFIEMFGCYNEKKRAIYKHNH</sequence>
<evidence type="ECO:0000255" key="1">
    <source>
        <dbReference type="HAMAP-Rule" id="MF_01725"/>
    </source>
</evidence>
<reference key="1">
    <citation type="journal article" date="2002" name="Nat. Genet.">
        <title>Genome sequence of the endocellular obligate symbiont of tsetse flies, Wigglesworthia glossinidia.</title>
        <authorList>
            <person name="Akman L."/>
            <person name="Yamashita A."/>
            <person name="Watanabe H."/>
            <person name="Oshima K."/>
            <person name="Shiba T."/>
            <person name="Hattori M."/>
            <person name="Aksoy S."/>
        </authorList>
    </citation>
    <scope>NUCLEOTIDE SEQUENCE [LARGE SCALE GENOMIC DNA]</scope>
</reference>
<name>ZNUC_WIGBR</name>
<accession>Q8D385</accession>
<gene>
    <name evidence="1" type="primary">znuC</name>
    <name type="ordered locus">WIGBR1160</name>
</gene>
<feature type="chain" id="PRO_0000281565" description="Zinc import ATP-binding protein ZnuC">
    <location>
        <begin position="1"/>
        <end position="232"/>
    </location>
</feature>
<feature type="domain" description="ABC transporter" evidence="1">
    <location>
        <begin position="5"/>
        <end position="220"/>
    </location>
</feature>
<feature type="binding site" evidence="1">
    <location>
        <begin position="37"/>
        <end position="44"/>
    </location>
    <ligand>
        <name>ATP</name>
        <dbReference type="ChEBI" id="CHEBI:30616"/>
    </ligand>
</feature>
<organism>
    <name type="scientific">Wigglesworthia glossinidia brevipalpis</name>
    <dbReference type="NCBI Taxonomy" id="36870"/>
    <lineage>
        <taxon>Bacteria</taxon>
        <taxon>Pseudomonadati</taxon>
        <taxon>Pseudomonadota</taxon>
        <taxon>Gammaproteobacteria</taxon>
        <taxon>Enterobacterales</taxon>
        <taxon>Erwiniaceae</taxon>
        <taxon>Wigglesworthia</taxon>
    </lineage>
</organism>
<protein>
    <recommendedName>
        <fullName evidence="1">Zinc import ATP-binding protein ZnuC</fullName>
        <ecNumber evidence="1">7.2.2.20</ecNumber>
    </recommendedName>
</protein>